<organism>
    <name type="scientific">Salinispora tropica (strain ATCC BAA-916 / DSM 44818 / JCM 13857 / NBRC 105044 / CNB-440)</name>
    <dbReference type="NCBI Taxonomy" id="369723"/>
    <lineage>
        <taxon>Bacteria</taxon>
        <taxon>Bacillati</taxon>
        <taxon>Actinomycetota</taxon>
        <taxon>Actinomycetes</taxon>
        <taxon>Micromonosporales</taxon>
        <taxon>Micromonosporaceae</taxon>
        <taxon>Salinispora</taxon>
    </lineage>
</organism>
<comment type="function">
    <text evidence="1">Condenses 4-methyl-5-(beta-hydroxyethyl)thiazole monophosphate (THZ-P) and 2-methyl-4-amino-5-hydroxymethyl pyrimidine pyrophosphate (HMP-PP) to form thiamine monophosphate (TMP).</text>
</comment>
<comment type="catalytic activity">
    <reaction evidence="1">
        <text>2-[(2R,5Z)-2-carboxy-4-methylthiazol-5(2H)-ylidene]ethyl phosphate + 4-amino-2-methyl-5-(diphosphooxymethyl)pyrimidine + 2 H(+) = thiamine phosphate + CO2 + diphosphate</text>
        <dbReference type="Rhea" id="RHEA:47844"/>
        <dbReference type="ChEBI" id="CHEBI:15378"/>
        <dbReference type="ChEBI" id="CHEBI:16526"/>
        <dbReference type="ChEBI" id="CHEBI:33019"/>
        <dbReference type="ChEBI" id="CHEBI:37575"/>
        <dbReference type="ChEBI" id="CHEBI:57841"/>
        <dbReference type="ChEBI" id="CHEBI:62899"/>
        <dbReference type="EC" id="2.5.1.3"/>
    </reaction>
</comment>
<comment type="catalytic activity">
    <reaction evidence="1">
        <text>2-(2-carboxy-4-methylthiazol-5-yl)ethyl phosphate + 4-amino-2-methyl-5-(diphosphooxymethyl)pyrimidine + 2 H(+) = thiamine phosphate + CO2 + diphosphate</text>
        <dbReference type="Rhea" id="RHEA:47848"/>
        <dbReference type="ChEBI" id="CHEBI:15378"/>
        <dbReference type="ChEBI" id="CHEBI:16526"/>
        <dbReference type="ChEBI" id="CHEBI:33019"/>
        <dbReference type="ChEBI" id="CHEBI:37575"/>
        <dbReference type="ChEBI" id="CHEBI:57841"/>
        <dbReference type="ChEBI" id="CHEBI:62890"/>
        <dbReference type="EC" id="2.5.1.3"/>
    </reaction>
</comment>
<comment type="catalytic activity">
    <reaction evidence="1">
        <text>4-methyl-5-(2-phosphooxyethyl)-thiazole + 4-amino-2-methyl-5-(diphosphooxymethyl)pyrimidine + H(+) = thiamine phosphate + diphosphate</text>
        <dbReference type="Rhea" id="RHEA:22328"/>
        <dbReference type="ChEBI" id="CHEBI:15378"/>
        <dbReference type="ChEBI" id="CHEBI:33019"/>
        <dbReference type="ChEBI" id="CHEBI:37575"/>
        <dbReference type="ChEBI" id="CHEBI:57841"/>
        <dbReference type="ChEBI" id="CHEBI:58296"/>
        <dbReference type="EC" id="2.5.1.3"/>
    </reaction>
</comment>
<comment type="cofactor">
    <cofactor evidence="1">
        <name>Mg(2+)</name>
        <dbReference type="ChEBI" id="CHEBI:18420"/>
    </cofactor>
    <text evidence="1">Binds 1 Mg(2+) ion per subunit.</text>
</comment>
<comment type="pathway">
    <text evidence="1">Cofactor biosynthesis; thiamine diphosphate biosynthesis; thiamine phosphate from 4-amino-2-methyl-5-diphosphomethylpyrimidine and 4-methyl-5-(2-phosphoethyl)-thiazole: step 1/1.</text>
</comment>
<comment type="similarity">
    <text evidence="1">Belongs to the thiamine-phosphate synthase family.</text>
</comment>
<reference key="1">
    <citation type="journal article" date="2007" name="Proc. Natl. Acad. Sci. U.S.A.">
        <title>Genome sequencing reveals complex secondary metabolome in the marine actinomycete Salinispora tropica.</title>
        <authorList>
            <person name="Udwary D.W."/>
            <person name="Zeigler L."/>
            <person name="Asolkar R.N."/>
            <person name="Singan V."/>
            <person name="Lapidus A."/>
            <person name="Fenical W."/>
            <person name="Jensen P.R."/>
            <person name="Moore B.S."/>
        </authorList>
    </citation>
    <scope>NUCLEOTIDE SEQUENCE [LARGE SCALE GENOMIC DNA]</scope>
    <source>
        <strain>ATCC BAA-916 / DSM 44818 / JCM 13857 / NBRC 105044 / CNB-440</strain>
    </source>
</reference>
<keyword id="KW-0460">Magnesium</keyword>
<keyword id="KW-0479">Metal-binding</keyword>
<keyword id="KW-1185">Reference proteome</keyword>
<keyword id="KW-0784">Thiamine biosynthesis</keyword>
<keyword id="KW-0808">Transferase</keyword>
<protein>
    <recommendedName>
        <fullName evidence="1">Thiamine-phosphate synthase</fullName>
        <shortName evidence="1">TP synthase</shortName>
        <shortName evidence="1">TPS</shortName>
        <ecNumber evidence="1">2.5.1.3</ecNumber>
    </recommendedName>
    <alternativeName>
        <fullName evidence="1">Thiamine-phosphate pyrophosphorylase</fullName>
        <shortName evidence="1">TMP pyrophosphorylase</shortName>
        <shortName evidence="1">TMP-PPase</shortName>
    </alternativeName>
</protein>
<feature type="chain" id="PRO_0000336428" description="Thiamine-phosphate synthase">
    <location>
        <begin position="1"/>
        <end position="208"/>
    </location>
</feature>
<feature type="binding site" evidence="1">
    <location>
        <begin position="37"/>
        <end position="39"/>
    </location>
    <ligand>
        <name>4-amino-2-methyl-5-(diphosphooxymethyl)pyrimidine</name>
        <dbReference type="ChEBI" id="CHEBI:57841"/>
    </ligand>
</feature>
<feature type="binding site" evidence="1">
    <location>
        <position position="70"/>
    </location>
    <ligand>
        <name>4-amino-2-methyl-5-(diphosphooxymethyl)pyrimidine</name>
        <dbReference type="ChEBI" id="CHEBI:57841"/>
    </ligand>
</feature>
<feature type="binding site" evidence="1">
    <location>
        <position position="71"/>
    </location>
    <ligand>
        <name>Mg(2+)</name>
        <dbReference type="ChEBI" id="CHEBI:18420"/>
    </ligand>
</feature>
<feature type="binding site" evidence="1">
    <location>
        <position position="90"/>
    </location>
    <ligand>
        <name>Mg(2+)</name>
        <dbReference type="ChEBI" id="CHEBI:18420"/>
    </ligand>
</feature>
<feature type="binding site" evidence="1">
    <location>
        <position position="109"/>
    </location>
    <ligand>
        <name>4-amino-2-methyl-5-(diphosphooxymethyl)pyrimidine</name>
        <dbReference type="ChEBI" id="CHEBI:57841"/>
    </ligand>
</feature>
<feature type="binding site" evidence="1">
    <location>
        <begin position="135"/>
        <end position="137"/>
    </location>
    <ligand>
        <name>2-[(2R,5Z)-2-carboxy-4-methylthiazol-5(2H)-ylidene]ethyl phosphate</name>
        <dbReference type="ChEBI" id="CHEBI:62899"/>
    </ligand>
</feature>
<feature type="binding site" evidence="1">
    <location>
        <position position="138"/>
    </location>
    <ligand>
        <name>4-amino-2-methyl-5-(diphosphooxymethyl)pyrimidine</name>
        <dbReference type="ChEBI" id="CHEBI:57841"/>
    </ligand>
</feature>
<feature type="binding site" evidence="1">
    <location>
        <position position="166"/>
    </location>
    <ligand>
        <name>2-[(2R,5Z)-2-carboxy-4-methylthiazol-5(2H)-ylidene]ethyl phosphate</name>
        <dbReference type="ChEBI" id="CHEBI:62899"/>
    </ligand>
</feature>
<sequence length="208" mass="20427">MSSLGRLHLITDARAGRNPLTVVQAALSVARTELVVQVRVADDATDRQAYDLARRVIALCARYDATCLVNDRLHVALAVGAAGGHVGADDLPVGAARAVLGSAAVLGVTARDADTAVEAVAAGASYLGVGPVHPTTSKEGLPPAIGVAGVGVVAAAVSVPVIAIGAVTAADVPVLRAAGAYGVAVIGALSHAADPAGATAALLEALTW</sequence>
<dbReference type="EC" id="2.5.1.3" evidence="1"/>
<dbReference type="EMBL" id="CP000667">
    <property type="protein sequence ID" value="ABP56319.1"/>
    <property type="molecule type" value="Genomic_DNA"/>
</dbReference>
<dbReference type="RefSeq" id="WP_012015094.1">
    <property type="nucleotide sequence ID" value="NC_009380.1"/>
</dbReference>
<dbReference type="SMR" id="A4XBL2"/>
<dbReference type="STRING" id="369723.Strop_3889"/>
<dbReference type="KEGG" id="stp:Strop_3889"/>
<dbReference type="PATRIC" id="fig|369723.5.peg.4014"/>
<dbReference type="eggNOG" id="COG0352">
    <property type="taxonomic scope" value="Bacteria"/>
</dbReference>
<dbReference type="HOGENOM" id="CLU_018272_3_4_11"/>
<dbReference type="UniPathway" id="UPA00060">
    <property type="reaction ID" value="UER00141"/>
</dbReference>
<dbReference type="Proteomes" id="UP000000235">
    <property type="component" value="Chromosome"/>
</dbReference>
<dbReference type="GO" id="GO:0005737">
    <property type="term" value="C:cytoplasm"/>
    <property type="evidence" value="ECO:0007669"/>
    <property type="project" value="TreeGrafter"/>
</dbReference>
<dbReference type="GO" id="GO:0000287">
    <property type="term" value="F:magnesium ion binding"/>
    <property type="evidence" value="ECO:0007669"/>
    <property type="project" value="UniProtKB-UniRule"/>
</dbReference>
<dbReference type="GO" id="GO:0004789">
    <property type="term" value="F:thiamine-phosphate diphosphorylase activity"/>
    <property type="evidence" value="ECO:0007669"/>
    <property type="project" value="UniProtKB-UniRule"/>
</dbReference>
<dbReference type="GO" id="GO:0009228">
    <property type="term" value="P:thiamine biosynthetic process"/>
    <property type="evidence" value="ECO:0007669"/>
    <property type="project" value="UniProtKB-KW"/>
</dbReference>
<dbReference type="GO" id="GO:0009229">
    <property type="term" value="P:thiamine diphosphate biosynthetic process"/>
    <property type="evidence" value="ECO:0007669"/>
    <property type="project" value="UniProtKB-UniRule"/>
</dbReference>
<dbReference type="CDD" id="cd00564">
    <property type="entry name" value="TMP_TenI"/>
    <property type="match status" value="1"/>
</dbReference>
<dbReference type="Gene3D" id="3.20.20.70">
    <property type="entry name" value="Aldolase class I"/>
    <property type="match status" value="1"/>
</dbReference>
<dbReference type="HAMAP" id="MF_00097">
    <property type="entry name" value="TMP_synthase"/>
    <property type="match status" value="1"/>
</dbReference>
<dbReference type="InterPro" id="IPR013785">
    <property type="entry name" value="Aldolase_TIM"/>
</dbReference>
<dbReference type="InterPro" id="IPR036206">
    <property type="entry name" value="ThiamineP_synth_sf"/>
</dbReference>
<dbReference type="InterPro" id="IPR022998">
    <property type="entry name" value="ThiamineP_synth_TenI"/>
</dbReference>
<dbReference type="InterPro" id="IPR034291">
    <property type="entry name" value="TMP_synthase"/>
</dbReference>
<dbReference type="PANTHER" id="PTHR20857">
    <property type="entry name" value="THIAMINE-PHOSPHATE PYROPHOSPHORYLASE"/>
    <property type="match status" value="1"/>
</dbReference>
<dbReference type="PANTHER" id="PTHR20857:SF15">
    <property type="entry name" value="THIAMINE-PHOSPHATE SYNTHASE"/>
    <property type="match status" value="1"/>
</dbReference>
<dbReference type="Pfam" id="PF02581">
    <property type="entry name" value="TMP-TENI"/>
    <property type="match status" value="1"/>
</dbReference>
<dbReference type="SUPFAM" id="SSF51391">
    <property type="entry name" value="Thiamin phosphate synthase"/>
    <property type="match status" value="1"/>
</dbReference>
<accession>A4XBL2</accession>
<name>THIE_SALTO</name>
<gene>
    <name evidence="1" type="primary">thiE</name>
    <name type="ordered locus">Strop_3889</name>
</gene>
<evidence type="ECO:0000255" key="1">
    <source>
        <dbReference type="HAMAP-Rule" id="MF_00097"/>
    </source>
</evidence>
<proteinExistence type="inferred from homology"/>